<reference key="1">
    <citation type="submission" date="2007-11" db="EMBL/GenBank/DDBJ databases">
        <authorList>
            <consortium name="The Salmonella enterica serovar Arizonae Genome Sequencing Project"/>
            <person name="McClelland M."/>
            <person name="Sanderson E.K."/>
            <person name="Porwollik S."/>
            <person name="Spieth J."/>
            <person name="Clifton W.S."/>
            <person name="Fulton R."/>
            <person name="Chunyan W."/>
            <person name="Wollam A."/>
            <person name="Shah N."/>
            <person name="Pepin K."/>
            <person name="Bhonagiri V."/>
            <person name="Nash W."/>
            <person name="Johnson M."/>
            <person name="Thiruvilangam P."/>
            <person name="Wilson R."/>
        </authorList>
    </citation>
    <scope>NUCLEOTIDE SEQUENCE [LARGE SCALE GENOMIC DNA]</scope>
    <source>
        <strain>ATCC BAA-731 / CDC346-86 / RSK2980</strain>
    </source>
</reference>
<comment type="function">
    <text evidence="1">Converts heme B (protoheme IX) to heme O by substitution of the vinyl group on carbon 2 of heme B porphyrin ring with a hydroxyethyl farnesyl side group.</text>
</comment>
<comment type="catalytic activity">
    <reaction evidence="1">
        <text>heme b + (2E,6E)-farnesyl diphosphate + H2O = Fe(II)-heme o + diphosphate</text>
        <dbReference type="Rhea" id="RHEA:28070"/>
        <dbReference type="ChEBI" id="CHEBI:15377"/>
        <dbReference type="ChEBI" id="CHEBI:33019"/>
        <dbReference type="ChEBI" id="CHEBI:60344"/>
        <dbReference type="ChEBI" id="CHEBI:60530"/>
        <dbReference type="ChEBI" id="CHEBI:175763"/>
        <dbReference type="EC" id="2.5.1.141"/>
    </reaction>
</comment>
<comment type="pathway">
    <text evidence="1">Porphyrin-containing compound metabolism; heme O biosynthesis; heme O from protoheme: step 1/1.</text>
</comment>
<comment type="subcellular location">
    <subcellularLocation>
        <location evidence="1">Cell inner membrane</location>
        <topology evidence="1">Multi-pass membrane protein</topology>
    </subcellularLocation>
</comment>
<comment type="miscellaneous">
    <text evidence="1">Carbon 2 of the heme B porphyrin ring is defined according to the Fischer nomenclature.</text>
</comment>
<comment type="similarity">
    <text evidence="1">Belongs to the UbiA prenyltransferase family. Protoheme IX farnesyltransferase subfamily.</text>
</comment>
<sequence>MMFKQYLQVTKPGIIFGNLISVIGGFLLASKGSIDYPLFIYTLVGVSLVVASGCVFNNFIDRDIDRKMERTKNRVLVKGLISPGVSLVYATLLGIAGFMLLWFGANPLACWLGVMGFVVYVGIYSLYMKRHSVYGTLIGSLSGAAPPVIGYCAVTGDFDSGAAILLAIFSLWQMPHSYAIAIFRLKDYQAANIPVLPVVKGISVAKNHITLYIIAFAVATLMLTLGGYAGYKYLVVAAAVSVWWLGMALRGYKVEDDKVWARKLFGFSIIAITALSIMMSVDFMVPNSQSLLTYVW</sequence>
<dbReference type="EC" id="2.5.1.141" evidence="1"/>
<dbReference type="EMBL" id="CP000880">
    <property type="protein sequence ID" value="ABX22354.1"/>
    <property type="molecule type" value="Genomic_DNA"/>
</dbReference>
<dbReference type="SMR" id="A9MM32"/>
<dbReference type="STRING" id="41514.SARI_02495"/>
<dbReference type="KEGG" id="ses:SARI_02495"/>
<dbReference type="HOGENOM" id="CLU_029631_0_0_6"/>
<dbReference type="UniPathway" id="UPA00834">
    <property type="reaction ID" value="UER00712"/>
</dbReference>
<dbReference type="Proteomes" id="UP000002084">
    <property type="component" value="Chromosome"/>
</dbReference>
<dbReference type="GO" id="GO:0005886">
    <property type="term" value="C:plasma membrane"/>
    <property type="evidence" value="ECO:0007669"/>
    <property type="project" value="UniProtKB-SubCell"/>
</dbReference>
<dbReference type="GO" id="GO:0008495">
    <property type="term" value="F:protoheme IX farnesyltransferase activity"/>
    <property type="evidence" value="ECO:0007669"/>
    <property type="project" value="UniProtKB-UniRule"/>
</dbReference>
<dbReference type="GO" id="GO:0048034">
    <property type="term" value="P:heme O biosynthetic process"/>
    <property type="evidence" value="ECO:0007669"/>
    <property type="project" value="UniProtKB-UniRule"/>
</dbReference>
<dbReference type="CDD" id="cd13957">
    <property type="entry name" value="PT_UbiA_Cox10"/>
    <property type="match status" value="1"/>
</dbReference>
<dbReference type="FunFam" id="1.10.357.140:FF:000001">
    <property type="entry name" value="Protoheme IX farnesyltransferase"/>
    <property type="match status" value="1"/>
</dbReference>
<dbReference type="Gene3D" id="1.10.357.140">
    <property type="entry name" value="UbiA prenyltransferase"/>
    <property type="match status" value="1"/>
</dbReference>
<dbReference type="HAMAP" id="MF_00154">
    <property type="entry name" value="CyoE_CtaB"/>
    <property type="match status" value="1"/>
</dbReference>
<dbReference type="InterPro" id="IPR006369">
    <property type="entry name" value="Protohaem_IX_farnesylTrfase"/>
</dbReference>
<dbReference type="InterPro" id="IPR000537">
    <property type="entry name" value="UbiA_prenyltransferase"/>
</dbReference>
<dbReference type="InterPro" id="IPR030470">
    <property type="entry name" value="UbiA_prenylTrfase_CS"/>
</dbReference>
<dbReference type="InterPro" id="IPR044878">
    <property type="entry name" value="UbiA_sf"/>
</dbReference>
<dbReference type="NCBIfam" id="TIGR01473">
    <property type="entry name" value="cyoE_ctaB"/>
    <property type="match status" value="1"/>
</dbReference>
<dbReference type="NCBIfam" id="NF003348">
    <property type="entry name" value="PRK04375.1-1"/>
    <property type="match status" value="1"/>
</dbReference>
<dbReference type="PANTHER" id="PTHR43448">
    <property type="entry name" value="PROTOHEME IX FARNESYLTRANSFERASE, MITOCHONDRIAL"/>
    <property type="match status" value="1"/>
</dbReference>
<dbReference type="PANTHER" id="PTHR43448:SF2">
    <property type="entry name" value="PROTOHEME IX FARNESYLTRANSFERASE, MITOCHONDRIAL"/>
    <property type="match status" value="1"/>
</dbReference>
<dbReference type="Pfam" id="PF01040">
    <property type="entry name" value="UbiA"/>
    <property type="match status" value="1"/>
</dbReference>
<dbReference type="SUPFAM" id="SSF82866">
    <property type="entry name" value="Multidrug efflux transporter AcrB transmembrane domain"/>
    <property type="match status" value="1"/>
</dbReference>
<dbReference type="PROSITE" id="PS00943">
    <property type="entry name" value="UBIA"/>
    <property type="match status" value="1"/>
</dbReference>
<organism>
    <name type="scientific">Salmonella arizonae (strain ATCC BAA-731 / CDC346-86 / RSK2980)</name>
    <dbReference type="NCBI Taxonomy" id="41514"/>
    <lineage>
        <taxon>Bacteria</taxon>
        <taxon>Pseudomonadati</taxon>
        <taxon>Pseudomonadota</taxon>
        <taxon>Gammaproteobacteria</taxon>
        <taxon>Enterobacterales</taxon>
        <taxon>Enterobacteriaceae</taxon>
        <taxon>Salmonella</taxon>
    </lineage>
</organism>
<feature type="chain" id="PRO_0000346009" description="Protoheme IX farnesyltransferase">
    <location>
        <begin position="1"/>
        <end position="296"/>
    </location>
</feature>
<feature type="topological domain" description="Cytoplasmic" evidence="1">
    <location>
        <begin position="1"/>
        <end position="9"/>
    </location>
</feature>
<feature type="transmembrane region" description="Helical" evidence="1">
    <location>
        <begin position="10"/>
        <end position="28"/>
    </location>
</feature>
<feature type="topological domain" description="Periplasmic" evidence="1">
    <location>
        <begin position="29"/>
        <end position="37"/>
    </location>
</feature>
<feature type="transmembrane region" description="Helical" evidence="1">
    <location>
        <begin position="38"/>
        <end position="56"/>
    </location>
</feature>
<feature type="topological domain" description="Cytoplasmic" evidence="1">
    <location>
        <begin position="57"/>
        <end position="78"/>
    </location>
</feature>
<feature type="transmembrane region" description="Helical" evidence="1">
    <location>
        <begin position="79"/>
        <end position="97"/>
    </location>
</feature>
<feature type="topological domain" description="Periplasmic" evidence="1">
    <location>
        <begin position="98"/>
        <end position="107"/>
    </location>
</feature>
<feature type="transmembrane region" description="Helical" evidence="1">
    <location>
        <begin position="108"/>
        <end position="126"/>
    </location>
</feature>
<feature type="topological domain" description="Cytoplasmic" evidence="1">
    <location>
        <begin position="127"/>
        <end position="197"/>
    </location>
</feature>
<feature type="transmembrane region" description="Helical" evidence="1">
    <location>
        <begin position="198"/>
        <end position="216"/>
    </location>
</feature>
<feature type="topological domain" description="Periplasmic" evidence="1">
    <location>
        <begin position="217"/>
        <end position="228"/>
    </location>
</feature>
<feature type="transmembrane region" description="Helical" evidence="1">
    <location>
        <begin position="229"/>
        <end position="247"/>
    </location>
</feature>
<feature type="topological domain" description="Cytoplasmic" evidence="1">
    <location>
        <begin position="248"/>
        <end position="268"/>
    </location>
</feature>
<feature type="transmembrane region" description="Helical" evidence="1">
    <location>
        <begin position="269"/>
        <end position="287"/>
    </location>
</feature>
<feature type="topological domain" description="Periplasmic" evidence="1">
    <location>
        <begin position="288"/>
        <end position="296"/>
    </location>
</feature>
<proteinExistence type="inferred from homology"/>
<name>CYOE_SALAR</name>
<protein>
    <recommendedName>
        <fullName evidence="1">Protoheme IX farnesyltransferase</fullName>
        <ecNumber evidence="1">2.5.1.141</ecNumber>
    </recommendedName>
    <alternativeName>
        <fullName evidence="1">Heme B farnesyltransferase</fullName>
    </alternativeName>
    <alternativeName>
        <fullName evidence="1">Heme O synthase</fullName>
    </alternativeName>
</protein>
<gene>
    <name evidence="1" type="primary">cyoE</name>
    <name type="ordered locus">SARI_02495</name>
</gene>
<keyword id="KW-0997">Cell inner membrane</keyword>
<keyword id="KW-1003">Cell membrane</keyword>
<keyword id="KW-0350">Heme biosynthesis</keyword>
<keyword id="KW-0472">Membrane</keyword>
<keyword id="KW-1185">Reference proteome</keyword>
<keyword id="KW-0808">Transferase</keyword>
<keyword id="KW-0812">Transmembrane</keyword>
<keyword id="KW-1133">Transmembrane helix</keyword>
<evidence type="ECO:0000255" key="1">
    <source>
        <dbReference type="HAMAP-Rule" id="MF_00154"/>
    </source>
</evidence>
<accession>A9MM32</accession>